<feature type="signal peptide" description="Tat-type signal" evidence="1">
    <location>
        <begin position="1"/>
        <end position="29"/>
    </location>
</feature>
<feature type="chain" id="PRO_1000186368" description="Periplasmic nitrate reductase" evidence="1">
    <location>
        <begin position="30"/>
        <end position="834"/>
    </location>
</feature>
<feature type="domain" description="4Fe-4S Mo/W bis-MGD-type" evidence="1">
    <location>
        <begin position="41"/>
        <end position="97"/>
    </location>
</feature>
<feature type="binding site" evidence="1">
    <location>
        <position position="48"/>
    </location>
    <ligand>
        <name>[4Fe-4S] cluster</name>
        <dbReference type="ChEBI" id="CHEBI:49883"/>
    </ligand>
</feature>
<feature type="binding site" evidence="1">
    <location>
        <position position="51"/>
    </location>
    <ligand>
        <name>[4Fe-4S] cluster</name>
        <dbReference type="ChEBI" id="CHEBI:49883"/>
    </ligand>
</feature>
<feature type="binding site" evidence="1">
    <location>
        <position position="55"/>
    </location>
    <ligand>
        <name>[4Fe-4S] cluster</name>
        <dbReference type="ChEBI" id="CHEBI:49883"/>
    </ligand>
</feature>
<feature type="binding site" evidence="1">
    <location>
        <position position="83"/>
    </location>
    <ligand>
        <name>[4Fe-4S] cluster</name>
        <dbReference type="ChEBI" id="CHEBI:49883"/>
    </ligand>
</feature>
<feature type="binding site" evidence="1">
    <location>
        <position position="85"/>
    </location>
    <ligand>
        <name>Mo-bis(molybdopterin guanine dinucleotide)</name>
        <dbReference type="ChEBI" id="CHEBI:60539"/>
    </ligand>
</feature>
<feature type="binding site" evidence="1">
    <location>
        <position position="152"/>
    </location>
    <ligand>
        <name>Mo-bis(molybdopterin guanine dinucleotide)</name>
        <dbReference type="ChEBI" id="CHEBI:60539"/>
    </ligand>
</feature>
<feature type="binding site" evidence="1">
    <location>
        <position position="177"/>
    </location>
    <ligand>
        <name>Mo-bis(molybdopterin guanine dinucleotide)</name>
        <dbReference type="ChEBI" id="CHEBI:60539"/>
    </ligand>
</feature>
<feature type="binding site" evidence="1">
    <location>
        <position position="181"/>
    </location>
    <ligand>
        <name>Mo-bis(molybdopterin guanine dinucleotide)</name>
        <dbReference type="ChEBI" id="CHEBI:60539"/>
    </ligand>
</feature>
<feature type="binding site" evidence="1">
    <location>
        <begin position="214"/>
        <end position="221"/>
    </location>
    <ligand>
        <name>Mo-bis(molybdopterin guanine dinucleotide)</name>
        <dbReference type="ChEBI" id="CHEBI:60539"/>
    </ligand>
</feature>
<feature type="binding site" evidence="1">
    <location>
        <begin position="245"/>
        <end position="249"/>
    </location>
    <ligand>
        <name>Mo-bis(molybdopterin guanine dinucleotide)</name>
        <dbReference type="ChEBI" id="CHEBI:60539"/>
    </ligand>
</feature>
<feature type="binding site" evidence="1">
    <location>
        <begin position="264"/>
        <end position="266"/>
    </location>
    <ligand>
        <name>Mo-bis(molybdopterin guanine dinucleotide)</name>
        <dbReference type="ChEBI" id="CHEBI:60539"/>
    </ligand>
</feature>
<feature type="binding site" evidence="1">
    <location>
        <position position="375"/>
    </location>
    <ligand>
        <name>Mo-bis(molybdopterin guanine dinucleotide)</name>
        <dbReference type="ChEBI" id="CHEBI:60539"/>
    </ligand>
</feature>
<feature type="binding site" evidence="1">
    <location>
        <position position="379"/>
    </location>
    <ligand>
        <name>Mo-bis(molybdopterin guanine dinucleotide)</name>
        <dbReference type="ChEBI" id="CHEBI:60539"/>
    </ligand>
</feature>
<feature type="binding site" evidence="1">
    <location>
        <position position="485"/>
    </location>
    <ligand>
        <name>Mo-bis(molybdopterin guanine dinucleotide)</name>
        <dbReference type="ChEBI" id="CHEBI:60539"/>
    </ligand>
</feature>
<feature type="binding site" evidence="1">
    <location>
        <begin position="511"/>
        <end position="512"/>
    </location>
    <ligand>
        <name>Mo-bis(molybdopterin guanine dinucleotide)</name>
        <dbReference type="ChEBI" id="CHEBI:60539"/>
    </ligand>
</feature>
<feature type="binding site" evidence="1">
    <location>
        <position position="534"/>
    </location>
    <ligand>
        <name>Mo-bis(molybdopterin guanine dinucleotide)</name>
        <dbReference type="ChEBI" id="CHEBI:60539"/>
    </ligand>
</feature>
<feature type="binding site" evidence="1">
    <location>
        <position position="561"/>
    </location>
    <ligand>
        <name>Mo-bis(molybdopterin guanine dinucleotide)</name>
        <dbReference type="ChEBI" id="CHEBI:60539"/>
    </ligand>
</feature>
<feature type="binding site" evidence="1">
    <location>
        <begin position="721"/>
        <end position="730"/>
    </location>
    <ligand>
        <name>Mo-bis(molybdopterin guanine dinucleotide)</name>
        <dbReference type="ChEBI" id="CHEBI:60539"/>
    </ligand>
</feature>
<feature type="binding site" evidence="1">
    <location>
        <position position="797"/>
    </location>
    <ligand>
        <name>substrate</name>
    </ligand>
</feature>
<feature type="binding site" evidence="1">
    <location>
        <position position="805"/>
    </location>
    <ligand>
        <name>Mo-bis(molybdopterin guanine dinucleotide)</name>
        <dbReference type="ChEBI" id="CHEBI:60539"/>
    </ligand>
</feature>
<feature type="binding site" evidence="1">
    <location>
        <position position="822"/>
    </location>
    <ligand>
        <name>Mo-bis(molybdopterin guanine dinucleotide)</name>
        <dbReference type="ChEBI" id="CHEBI:60539"/>
    </ligand>
</feature>
<reference key="1">
    <citation type="journal article" date="2009" name="Genome Res.">
        <title>Newly introduced genomic prophage islands are critical determinants of in vivo competitiveness in the Liverpool epidemic strain of Pseudomonas aeruginosa.</title>
        <authorList>
            <person name="Winstanley C."/>
            <person name="Langille M.G.I."/>
            <person name="Fothergill J.L."/>
            <person name="Kukavica-Ibrulj I."/>
            <person name="Paradis-Bleau C."/>
            <person name="Sanschagrin F."/>
            <person name="Thomson N.R."/>
            <person name="Winsor G.L."/>
            <person name="Quail M.A."/>
            <person name="Lennard N."/>
            <person name="Bignell A."/>
            <person name="Clarke L."/>
            <person name="Seeger K."/>
            <person name="Saunders D."/>
            <person name="Harris D."/>
            <person name="Parkhill J."/>
            <person name="Hancock R.E.W."/>
            <person name="Brinkman F.S.L."/>
            <person name="Levesque R.C."/>
        </authorList>
    </citation>
    <scope>NUCLEOTIDE SEQUENCE [LARGE SCALE GENOMIC DNA]</scope>
    <source>
        <strain>LESB58</strain>
    </source>
</reference>
<dbReference type="EC" id="1.9.6.1" evidence="1"/>
<dbReference type="EMBL" id="FM209186">
    <property type="protein sequence ID" value="CAW28902.1"/>
    <property type="molecule type" value="Genomic_DNA"/>
</dbReference>
<dbReference type="RefSeq" id="WP_003162643.1">
    <property type="nucleotide sequence ID" value="NC_011770.1"/>
</dbReference>
<dbReference type="SMR" id="B7UX15"/>
<dbReference type="KEGG" id="pag:PLES_41471"/>
<dbReference type="HOGENOM" id="CLU_000422_13_4_6"/>
<dbReference type="GO" id="GO:0016020">
    <property type="term" value="C:membrane"/>
    <property type="evidence" value="ECO:0007669"/>
    <property type="project" value="TreeGrafter"/>
</dbReference>
<dbReference type="GO" id="GO:0009325">
    <property type="term" value="C:nitrate reductase complex"/>
    <property type="evidence" value="ECO:0007669"/>
    <property type="project" value="TreeGrafter"/>
</dbReference>
<dbReference type="GO" id="GO:0042597">
    <property type="term" value="C:periplasmic space"/>
    <property type="evidence" value="ECO:0007669"/>
    <property type="project" value="UniProtKB-SubCell"/>
</dbReference>
<dbReference type="GO" id="GO:0051539">
    <property type="term" value="F:4 iron, 4 sulfur cluster binding"/>
    <property type="evidence" value="ECO:0007669"/>
    <property type="project" value="UniProtKB-KW"/>
</dbReference>
<dbReference type="GO" id="GO:0009055">
    <property type="term" value="F:electron transfer activity"/>
    <property type="evidence" value="ECO:0007669"/>
    <property type="project" value="UniProtKB-UniRule"/>
</dbReference>
<dbReference type="GO" id="GO:0005506">
    <property type="term" value="F:iron ion binding"/>
    <property type="evidence" value="ECO:0007669"/>
    <property type="project" value="UniProtKB-UniRule"/>
</dbReference>
<dbReference type="GO" id="GO:0030151">
    <property type="term" value="F:molybdenum ion binding"/>
    <property type="evidence" value="ECO:0007669"/>
    <property type="project" value="InterPro"/>
</dbReference>
<dbReference type="GO" id="GO:0043546">
    <property type="term" value="F:molybdopterin cofactor binding"/>
    <property type="evidence" value="ECO:0007669"/>
    <property type="project" value="InterPro"/>
</dbReference>
<dbReference type="GO" id="GO:0050140">
    <property type="term" value="F:nitrate reductase (cytochrome) activity"/>
    <property type="evidence" value="ECO:0007669"/>
    <property type="project" value="UniProtKB-EC"/>
</dbReference>
<dbReference type="GO" id="GO:0045333">
    <property type="term" value="P:cellular respiration"/>
    <property type="evidence" value="ECO:0007669"/>
    <property type="project" value="UniProtKB-ARBA"/>
</dbReference>
<dbReference type="GO" id="GO:0006777">
    <property type="term" value="P:Mo-molybdopterin cofactor biosynthetic process"/>
    <property type="evidence" value="ECO:0007669"/>
    <property type="project" value="UniProtKB-UniRule"/>
</dbReference>
<dbReference type="GO" id="GO:0042128">
    <property type="term" value="P:nitrate assimilation"/>
    <property type="evidence" value="ECO:0007669"/>
    <property type="project" value="UniProtKB-UniRule"/>
</dbReference>
<dbReference type="CDD" id="cd02791">
    <property type="entry name" value="MopB_CT_Nitrate-R-NapA-like"/>
    <property type="match status" value="1"/>
</dbReference>
<dbReference type="CDD" id="cd02754">
    <property type="entry name" value="MopB_Nitrate-R-NapA-like"/>
    <property type="match status" value="1"/>
</dbReference>
<dbReference type="FunFam" id="2.40.40.20:FF:000005">
    <property type="entry name" value="Periplasmic nitrate reductase"/>
    <property type="match status" value="1"/>
</dbReference>
<dbReference type="Gene3D" id="2.40.40.20">
    <property type="match status" value="1"/>
</dbReference>
<dbReference type="Gene3D" id="3.30.200.210">
    <property type="match status" value="1"/>
</dbReference>
<dbReference type="Gene3D" id="3.40.50.740">
    <property type="match status" value="1"/>
</dbReference>
<dbReference type="Gene3D" id="3.40.228.10">
    <property type="entry name" value="Dimethylsulfoxide Reductase, domain 2"/>
    <property type="match status" value="1"/>
</dbReference>
<dbReference type="HAMAP" id="MF_01630">
    <property type="entry name" value="Nitrate_reduct_NapA"/>
    <property type="match status" value="1"/>
</dbReference>
<dbReference type="InterPro" id="IPR009010">
    <property type="entry name" value="Asp_de-COase-like_dom_sf"/>
</dbReference>
<dbReference type="InterPro" id="IPR041957">
    <property type="entry name" value="CT_Nitrate-R-NapA-like"/>
</dbReference>
<dbReference type="InterPro" id="IPR006657">
    <property type="entry name" value="MoPterin_dinucl-bd_dom"/>
</dbReference>
<dbReference type="InterPro" id="IPR006656">
    <property type="entry name" value="Mopterin_OxRdtase"/>
</dbReference>
<dbReference type="InterPro" id="IPR006963">
    <property type="entry name" value="Mopterin_OxRdtase_4Fe-4S_dom"/>
</dbReference>
<dbReference type="InterPro" id="IPR027467">
    <property type="entry name" value="MopterinOxRdtase_cofactor_BS"/>
</dbReference>
<dbReference type="InterPro" id="IPR010051">
    <property type="entry name" value="Periplasm_NO3_reductase_lsu"/>
</dbReference>
<dbReference type="InterPro" id="IPR050123">
    <property type="entry name" value="Prok_molybdopt-oxidoreductase"/>
</dbReference>
<dbReference type="InterPro" id="IPR006311">
    <property type="entry name" value="TAT_signal"/>
</dbReference>
<dbReference type="NCBIfam" id="TIGR01706">
    <property type="entry name" value="NAPA"/>
    <property type="match status" value="1"/>
</dbReference>
<dbReference type="NCBIfam" id="NF010055">
    <property type="entry name" value="PRK13532.1"/>
    <property type="match status" value="1"/>
</dbReference>
<dbReference type="PANTHER" id="PTHR43105:SF11">
    <property type="entry name" value="PERIPLASMIC NITRATE REDUCTASE"/>
    <property type="match status" value="1"/>
</dbReference>
<dbReference type="PANTHER" id="PTHR43105">
    <property type="entry name" value="RESPIRATORY NITRATE REDUCTASE"/>
    <property type="match status" value="1"/>
</dbReference>
<dbReference type="Pfam" id="PF04879">
    <property type="entry name" value="Molybdop_Fe4S4"/>
    <property type="match status" value="1"/>
</dbReference>
<dbReference type="Pfam" id="PF00384">
    <property type="entry name" value="Molybdopterin"/>
    <property type="match status" value="1"/>
</dbReference>
<dbReference type="Pfam" id="PF01568">
    <property type="entry name" value="Molydop_binding"/>
    <property type="match status" value="1"/>
</dbReference>
<dbReference type="SMART" id="SM00926">
    <property type="entry name" value="Molybdop_Fe4S4"/>
    <property type="match status" value="1"/>
</dbReference>
<dbReference type="SUPFAM" id="SSF50692">
    <property type="entry name" value="ADC-like"/>
    <property type="match status" value="1"/>
</dbReference>
<dbReference type="SUPFAM" id="SSF53706">
    <property type="entry name" value="Formate dehydrogenase/DMSO reductase, domains 1-3"/>
    <property type="match status" value="1"/>
</dbReference>
<dbReference type="PROSITE" id="PS51669">
    <property type="entry name" value="4FE4S_MOW_BIS_MGD"/>
    <property type="match status" value="1"/>
</dbReference>
<dbReference type="PROSITE" id="PS00551">
    <property type="entry name" value="MOLYBDOPTERIN_PROK_1"/>
    <property type="match status" value="1"/>
</dbReference>
<dbReference type="PROSITE" id="PS51318">
    <property type="entry name" value="TAT"/>
    <property type="match status" value="1"/>
</dbReference>
<evidence type="ECO:0000255" key="1">
    <source>
        <dbReference type="HAMAP-Rule" id="MF_01630"/>
    </source>
</evidence>
<proteinExistence type="inferred from homology"/>
<name>NAPA_PSEA8</name>
<accession>B7UX15</accession>
<gene>
    <name evidence="1" type="primary">napA</name>
    <name type="ordered locus">PLES_41471</name>
</gene>
<sequence length="834" mass="93484">MNLTRREFAKANAAAIAAAAAGLPILVRASNLVTEADVTSLVWNKAPCRFCGTGCSVMVATRDGQVVATHGDIKAEVNRGINCVKGYFLSKIMYGSDRLTRPLLRMKDGKFDKQGEFQPISWEQAFDIMAEKFKAALKAKGPESVGMFGSGQWTVWEGYAANKLFKAGLRSNNIDPNARHCMASAVMGFMRSFGMDEPMGCYDDIEATDSFVLWGSNMAEMHPVLWSRVTDRRLSAPQVKVAVLSTFEHRSFELADLPMVFKPQTDLIILNYIANHIIESGAVNRDFVERHVRFAHGAEDIGYGLRPDDPLEKKAKNADKANTWSDIDFKAFAEFVKPYTLERTARESGVPAERLKALAELYADPKRKVVSFWTMGFNQHTRGVWANNLIYNIHLLTGKISEPGNSPFSLTGQPSACGTAREVGTFSHRLPADLVVTNPKHRETAEKIWKVPAGTIQEKVGFHAVQQSRMLKDGVLNVYWTQVSNNMQAGPNVMQEVLPGWRNPDNFVIVSDVYPTVSAQAADLILPSAMWVEKEGAFGNAERRTQFWHQLVKAPGEAKSDLWQLVEFSKRFTTDEVWPAELLAKAPELKGKTLYDVLFRNGQVDRFPASDLAKGYANDEVDAFGFYIQKGLFEEYAAFGRGHGHDLAPFDAYHEARGLRWPVVDGKETRWRYREGYDPYVSKGSGVQFYGYPDKKAIAFALPYEPPAEAPDQDYPFWLATGRVLEHWHTGSMTARVPELYKAVPDALVYMHPEDARQLKLRRGSEVKVVSRRGEIRARVETRGRNKPPQGLVFVPFFDANKLINKVTLDATDPISKQTDYKKCAVRIELLNLA</sequence>
<keyword id="KW-0004">4Fe-4S</keyword>
<keyword id="KW-0249">Electron transport</keyword>
<keyword id="KW-0408">Iron</keyword>
<keyword id="KW-0411">Iron-sulfur</keyword>
<keyword id="KW-0479">Metal-binding</keyword>
<keyword id="KW-0500">Molybdenum</keyword>
<keyword id="KW-0534">Nitrate assimilation</keyword>
<keyword id="KW-0560">Oxidoreductase</keyword>
<keyword id="KW-0574">Periplasm</keyword>
<keyword id="KW-0732">Signal</keyword>
<keyword id="KW-0813">Transport</keyword>
<protein>
    <recommendedName>
        <fullName evidence="1">Periplasmic nitrate reductase</fullName>
        <ecNumber evidence="1">1.9.6.1</ecNumber>
    </recommendedName>
</protein>
<organism>
    <name type="scientific">Pseudomonas aeruginosa (strain LESB58)</name>
    <dbReference type="NCBI Taxonomy" id="557722"/>
    <lineage>
        <taxon>Bacteria</taxon>
        <taxon>Pseudomonadati</taxon>
        <taxon>Pseudomonadota</taxon>
        <taxon>Gammaproteobacteria</taxon>
        <taxon>Pseudomonadales</taxon>
        <taxon>Pseudomonadaceae</taxon>
        <taxon>Pseudomonas</taxon>
    </lineage>
</organism>
<comment type="function">
    <text evidence="1">Catalytic subunit of the periplasmic nitrate reductase complex NapAB. Receives electrons from NapB and catalyzes the reduction of nitrate to nitrite.</text>
</comment>
<comment type="catalytic activity">
    <reaction evidence="1">
        <text>2 Fe(II)-[cytochrome] + nitrate + 2 H(+) = 2 Fe(III)-[cytochrome] + nitrite + H2O</text>
        <dbReference type="Rhea" id="RHEA:12909"/>
        <dbReference type="Rhea" id="RHEA-COMP:11777"/>
        <dbReference type="Rhea" id="RHEA-COMP:11778"/>
        <dbReference type="ChEBI" id="CHEBI:15377"/>
        <dbReference type="ChEBI" id="CHEBI:15378"/>
        <dbReference type="ChEBI" id="CHEBI:16301"/>
        <dbReference type="ChEBI" id="CHEBI:17632"/>
        <dbReference type="ChEBI" id="CHEBI:29033"/>
        <dbReference type="ChEBI" id="CHEBI:29034"/>
        <dbReference type="EC" id="1.9.6.1"/>
    </reaction>
</comment>
<comment type="cofactor">
    <cofactor evidence="1">
        <name>[4Fe-4S] cluster</name>
        <dbReference type="ChEBI" id="CHEBI:49883"/>
    </cofactor>
    <text evidence="1">Binds 1 [4Fe-4S] cluster.</text>
</comment>
<comment type="cofactor">
    <cofactor evidence="1">
        <name>Mo-bis(molybdopterin guanine dinucleotide)</name>
        <dbReference type="ChEBI" id="CHEBI:60539"/>
    </cofactor>
    <text evidence="1">Binds 1 molybdenum-bis(molybdopterin guanine dinucleotide) (Mo-bis-MGD) cofactor per subunit.</text>
</comment>
<comment type="subunit">
    <text evidence="1">Component of the periplasmic nitrate reductase NapAB complex composed of NapA and NapB.</text>
</comment>
<comment type="subcellular location">
    <subcellularLocation>
        <location evidence="1">Periplasm</location>
    </subcellularLocation>
</comment>
<comment type="PTM">
    <text evidence="1">Predicted to be exported by the Tat system. The position of the signal peptide cleavage has not been experimentally proven.</text>
</comment>
<comment type="similarity">
    <text evidence="1">Belongs to the prokaryotic molybdopterin-containing oxidoreductase family. NasA/NapA/NarB subfamily.</text>
</comment>